<organism>
    <name type="scientific">Porphyromonas gingivalis (strain ATCC BAA-308 / W83)</name>
    <dbReference type="NCBI Taxonomy" id="242619"/>
    <lineage>
        <taxon>Bacteria</taxon>
        <taxon>Pseudomonadati</taxon>
        <taxon>Bacteroidota</taxon>
        <taxon>Bacteroidia</taxon>
        <taxon>Bacteroidales</taxon>
        <taxon>Porphyromonadaceae</taxon>
        <taxon>Porphyromonas</taxon>
    </lineage>
</organism>
<dbReference type="EC" id="6.3.5.2" evidence="1"/>
<dbReference type="EMBL" id="AE015924">
    <property type="protein sequence ID" value="AAQ65775.1"/>
    <property type="molecule type" value="Genomic_DNA"/>
</dbReference>
<dbReference type="RefSeq" id="WP_004585128.1">
    <property type="nucleotide sequence ID" value="NC_002950.2"/>
</dbReference>
<dbReference type="SMR" id="Q7MWL9"/>
<dbReference type="STRING" id="242619.PG_0589"/>
<dbReference type="MEROPS" id="C26.957"/>
<dbReference type="EnsemblBacteria" id="AAQ65775">
    <property type="protein sequence ID" value="AAQ65775"/>
    <property type="gene ID" value="PG_0589"/>
</dbReference>
<dbReference type="KEGG" id="pgi:PG_0589"/>
<dbReference type="eggNOG" id="COG0518">
    <property type="taxonomic scope" value="Bacteria"/>
</dbReference>
<dbReference type="eggNOG" id="COG0519">
    <property type="taxonomic scope" value="Bacteria"/>
</dbReference>
<dbReference type="HOGENOM" id="CLU_014340_0_5_10"/>
<dbReference type="UniPathway" id="UPA00189">
    <property type="reaction ID" value="UER00296"/>
</dbReference>
<dbReference type="Proteomes" id="UP000000588">
    <property type="component" value="Chromosome"/>
</dbReference>
<dbReference type="GO" id="GO:0005829">
    <property type="term" value="C:cytosol"/>
    <property type="evidence" value="ECO:0007669"/>
    <property type="project" value="TreeGrafter"/>
</dbReference>
<dbReference type="GO" id="GO:0005524">
    <property type="term" value="F:ATP binding"/>
    <property type="evidence" value="ECO:0007669"/>
    <property type="project" value="UniProtKB-UniRule"/>
</dbReference>
<dbReference type="GO" id="GO:0003921">
    <property type="term" value="F:GMP synthase activity"/>
    <property type="evidence" value="ECO:0007669"/>
    <property type="project" value="InterPro"/>
</dbReference>
<dbReference type="CDD" id="cd01742">
    <property type="entry name" value="GATase1_GMP_Synthase"/>
    <property type="match status" value="1"/>
</dbReference>
<dbReference type="CDD" id="cd01997">
    <property type="entry name" value="GMP_synthase_C"/>
    <property type="match status" value="1"/>
</dbReference>
<dbReference type="FunFam" id="3.30.300.10:FF:000002">
    <property type="entry name" value="GMP synthase [glutamine-hydrolyzing]"/>
    <property type="match status" value="1"/>
</dbReference>
<dbReference type="FunFam" id="3.40.50.620:FF:000001">
    <property type="entry name" value="GMP synthase [glutamine-hydrolyzing]"/>
    <property type="match status" value="1"/>
</dbReference>
<dbReference type="FunFam" id="3.40.50.880:FF:000001">
    <property type="entry name" value="GMP synthase [glutamine-hydrolyzing]"/>
    <property type="match status" value="1"/>
</dbReference>
<dbReference type="Gene3D" id="3.30.300.10">
    <property type="match status" value="1"/>
</dbReference>
<dbReference type="Gene3D" id="3.40.50.880">
    <property type="match status" value="1"/>
</dbReference>
<dbReference type="Gene3D" id="3.40.50.620">
    <property type="entry name" value="HUPs"/>
    <property type="match status" value="1"/>
</dbReference>
<dbReference type="HAMAP" id="MF_00344">
    <property type="entry name" value="GMP_synthase"/>
    <property type="match status" value="1"/>
</dbReference>
<dbReference type="InterPro" id="IPR029062">
    <property type="entry name" value="Class_I_gatase-like"/>
</dbReference>
<dbReference type="InterPro" id="IPR017926">
    <property type="entry name" value="GATASE"/>
</dbReference>
<dbReference type="InterPro" id="IPR001674">
    <property type="entry name" value="GMP_synth_C"/>
</dbReference>
<dbReference type="InterPro" id="IPR004739">
    <property type="entry name" value="GMP_synth_GATase"/>
</dbReference>
<dbReference type="InterPro" id="IPR022955">
    <property type="entry name" value="GMP_synthase"/>
</dbReference>
<dbReference type="InterPro" id="IPR025777">
    <property type="entry name" value="GMPS_ATP_PPase_dom"/>
</dbReference>
<dbReference type="InterPro" id="IPR022310">
    <property type="entry name" value="NAD/GMP_synthase"/>
</dbReference>
<dbReference type="InterPro" id="IPR014729">
    <property type="entry name" value="Rossmann-like_a/b/a_fold"/>
</dbReference>
<dbReference type="NCBIfam" id="TIGR00884">
    <property type="entry name" value="guaA_Cterm"/>
    <property type="match status" value="1"/>
</dbReference>
<dbReference type="NCBIfam" id="TIGR00888">
    <property type="entry name" value="guaA_Nterm"/>
    <property type="match status" value="1"/>
</dbReference>
<dbReference type="NCBIfam" id="NF000848">
    <property type="entry name" value="PRK00074.1"/>
    <property type="match status" value="1"/>
</dbReference>
<dbReference type="PANTHER" id="PTHR11922:SF2">
    <property type="entry name" value="GMP SYNTHASE [GLUTAMINE-HYDROLYZING]"/>
    <property type="match status" value="1"/>
</dbReference>
<dbReference type="PANTHER" id="PTHR11922">
    <property type="entry name" value="GMP SYNTHASE-RELATED"/>
    <property type="match status" value="1"/>
</dbReference>
<dbReference type="Pfam" id="PF00117">
    <property type="entry name" value="GATase"/>
    <property type="match status" value="1"/>
</dbReference>
<dbReference type="Pfam" id="PF00958">
    <property type="entry name" value="GMP_synt_C"/>
    <property type="match status" value="1"/>
</dbReference>
<dbReference type="Pfam" id="PF02540">
    <property type="entry name" value="NAD_synthase"/>
    <property type="match status" value="1"/>
</dbReference>
<dbReference type="PRINTS" id="PR00096">
    <property type="entry name" value="GATASE"/>
</dbReference>
<dbReference type="SUPFAM" id="SSF52402">
    <property type="entry name" value="Adenine nucleotide alpha hydrolases-like"/>
    <property type="match status" value="1"/>
</dbReference>
<dbReference type="SUPFAM" id="SSF52317">
    <property type="entry name" value="Class I glutamine amidotransferase-like"/>
    <property type="match status" value="1"/>
</dbReference>
<dbReference type="SUPFAM" id="SSF54810">
    <property type="entry name" value="GMP synthetase C-terminal dimerisation domain"/>
    <property type="match status" value="1"/>
</dbReference>
<dbReference type="PROSITE" id="PS51273">
    <property type="entry name" value="GATASE_TYPE_1"/>
    <property type="match status" value="1"/>
</dbReference>
<dbReference type="PROSITE" id="PS51553">
    <property type="entry name" value="GMPS_ATP_PPASE"/>
    <property type="match status" value="1"/>
</dbReference>
<sequence>MLEKLIILDFGSQTTQLIARRIRELNTYCEVYPYNKLPEDLSGVRGIILSGSPYSVYDSKAFRIELSELRGKLPLLGICYGAQSLVHQAGGKVEPCDSREYGRTHLTLRQPDDALLTGLQSGTTVWMSHGDTITSLPEGFEVIAGTEDVPNAAFRIRGEKTWGVQFHPEIYHSEEGTKLLGNFLDICGMKRDWTPASFIEATVQELRERLGDDKVILALSGGVDSSVVAVLLNKAIGRNLTCIFVDHGLLRKGEFERVLQDYEHLGLNVIGVNAKEKFFAALSGVTDPEQKRKIIGRGFIEVFDEEARKLKDIKWLGQGTIYPDVIESLSITGMVIKSHHNVGGLPERMNLRLVEPLRMLFKDEVRRVGLELGMMPHLIHRHPFPGPGLGIRILGEITEEKATILQNADDIYMSLMREWGLYDQVWQAGAILLPVRSVGVMGDERTYEYTVALRAVTSMDAMSADWVHLPYDFLAKVSNEIINKVRGVNRVVYDISSKPPSTIEWE</sequence>
<accession>Q7MWL9</accession>
<keyword id="KW-0067">ATP-binding</keyword>
<keyword id="KW-0315">Glutamine amidotransferase</keyword>
<keyword id="KW-0332">GMP biosynthesis</keyword>
<keyword id="KW-0436">Ligase</keyword>
<keyword id="KW-0547">Nucleotide-binding</keyword>
<keyword id="KW-0658">Purine biosynthesis</keyword>
<keyword id="KW-1185">Reference proteome</keyword>
<proteinExistence type="inferred from homology"/>
<reference key="1">
    <citation type="journal article" date="2003" name="J. Bacteriol.">
        <title>Complete genome sequence of the oral pathogenic bacterium Porphyromonas gingivalis strain W83.</title>
        <authorList>
            <person name="Nelson K.E."/>
            <person name="Fleischmann R.D."/>
            <person name="DeBoy R.T."/>
            <person name="Paulsen I.T."/>
            <person name="Fouts D.E."/>
            <person name="Eisen J.A."/>
            <person name="Daugherty S.C."/>
            <person name="Dodson R.J."/>
            <person name="Durkin A.S."/>
            <person name="Gwinn M.L."/>
            <person name="Haft D.H."/>
            <person name="Kolonay J.F."/>
            <person name="Nelson W.C."/>
            <person name="Mason T.M."/>
            <person name="Tallon L."/>
            <person name="Gray J."/>
            <person name="Granger D."/>
            <person name="Tettelin H."/>
            <person name="Dong H."/>
            <person name="Galvin J.L."/>
            <person name="Duncan M.J."/>
            <person name="Dewhirst F.E."/>
            <person name="Fraser C.M."/>
        </authorList>
    </citation>
    <scope>NUCLEOTIDE SEQUENCE [LARGE SCALE GENOMIC DNA]</scope>
    <source>
        <strain>ATCC BAA-308 / W83</strain>
    </source>
</reference>
<protein>
    <recommendedName>
        <fullName evidence="1">GMP synthase [glutamine-hydrolyzing]</fullName>
        <ecNumber evidence="1">6.3.5.2</ecNumber>
    </recommendedName>
    <alternativeName>
        <fullName evidence="1">GMP synthetase</fullName>
    </alternativeName>
    <alternativeName>
        <fullName evidence="1">Glutamine amidotransferase</fullName>
    </alternativeName>
</protein>
<feature type="chain" id="PRO_0000140158" description="GMP synthase [glutamine-hydrolyzing]">
    <location>
        <begin position="1"/>
        <end position="506"/>
    </location>
</feature>
<feature type="domain" description="Glutamine amidotransferase type-1" evidence="1">
    <location>
        <begin position="4"/>
        <end position="192"/>
    </location>
</feature>
<feature type="domain" description="GMPS ATP-PPase" evidence="1">
    <location>
        <begin position="193"/>
        <end position="381"/>
    </location>
</feature>
<feature type="active site" description="Nucleophile" evidence="1">
    <location>
        <position position="79"/>
    </location>
</feature>
<feature type="active site" evidence="1">
    <location>
        <position position="167"/>
    </location>
</feature>
<feature type="active site" evidence="1">
    <location>
        <position position="169"/>
    </location>
</feature>
<feature type="binding site" evidence="1">
    <location>
        <begin position="220"/>
        <end position="226"/>
    </location>
    <ligand>
        <name>ATP</name>
        <dbReference type="ChEBI" id="CHEBI:30616"/>
    </ligand>
</feature>
<gene>
    <name evidence="1" type="primary">guaA</name>
    <name type="ordered locus">PG_0589</name>
</gene>
<evidence type="ECO:0000255" key="1">
    <source>
        <dbReference type="HAMAP-Rule" id="MF_00344"/>
    </source>
</evidence>
<name>GUAA_PORGI</name>
<comment type="function">
    <text evidence="1">Catalyzes the synthesis of GMP from XMP.</text>
</comment>
<comment type="catalytic activity">
    <reaction evidence="1">
        <text>XMP + L-glutamine + ATP + H2O = GMP + L-glutamate + AMP + diphosphate + 2 H(+)</text>
        <dbReference type="Rhea" id="RHEA:11680"/>
        <dbReference type="ChEBI" id="CHEBI:15377"/>
        <dbReference type="ChEBI" id="CHEBI:15378"/>
        <dbReference type="ChEBI" id="CHEBI:29985"/>
        <dbReference type="ChEBI" id="CHEBI:30616"/>
        <dbReference type="ChEBI" id="CHEBI:33019"/>
        <dbReference type="ChEBI" id="CHEBI:57464"/>
        <dbReference type="ChEBI" id="CHEBI:58115"/>
        <dbReference type="ChEBI" id="CHEBI:58359"/>
        <dbReference type="ChEBI" id="CHEBI:456215"/>
        <dbReference type="EC" id="6.3.5.2"/>
    </reaction>
</comment>
<comment type="pathway">
    <text evidence="1">Purine metabolism; GMP biosynthesis; GMP from XMP (L-Gln route): step 1/1.</text>
</comment>
<comment type="subunit">
    <text evidence="1">Homodimer.</text>
</comment>